<gene>
    <name type="primary">FZD8</name>
</gene>
<proteinExistence type="evidence at protein level"/>
<sequence>MEWGYLLEVTSLLAALALLQRSSGAAAASAKELACQEITVPLCKGIGYNYTYMPNQFNHDTQDEAGLEVHQFWPLVEIQCSPDLKFFLCSMYTPICLEDYKKPLPPCRSVCERAKAGCAPLMRQYGFAWPDRMRCDRLPEQGNPDTLCMDYNRTDLTTAAPSPPRRLPPPPPGEQPPSGSGHGRPPGARPPHRGGGRGGGGGDAAAPPARGGGGGGKARPPGGGAAPCEPGCQCRAPMVSVSSERHPLYNRVKTGQIANCALPCHNPFFSQDERAFTVFWIGLWSVLCFVSTFATVSTFLIDMERFKYPERPIIFLSACYLFVSVGYLVRLVAGHEKVACSGGAPGAGGAGGAGGAAAGAGAAGAGAGGPGGRGEYEELGAVEQHVRYETTGPALCTVVFLLVYFFGMASSIWWVILSLTWFLAAGMKWGNEAIAGYSQYFHLAAWLVPSVKSIAVLALSSVDGDPVAGICYVGNQSLDNLRGFVLAPLVIYLFIGTMFLLAGFVSLFRIRSVIKQQDGPTKTHKLEKLMIRLGLFTVLYTVPAAVVVACLFYEQHNRPRWEATHNCPCLRDLQPDQARRPDYAVFMLKYFMCLVVGITSGVWVWSGKTLESWRSLCTRCCWASKGAAVGGGAGATAAGGGGGPGGGGGGGPGGGGGPGGGGGSLYSDVSTGLTWRSGTASSVSYPKQMPLSQV</sequence>
<feature type="signal peptide" evidence="2">
    <location>
        <begin position="1"/>
        <end position="27"/>
    </location>
</feature>
<feature type="chain" id="PRO_0000013000" description="Frizzled-8">
    <location>
        <begin position="28"/>
        <end position="694"/>
    </location>
</feature>
<feature type="topological domain" description="Extracellular" evidence="2">
    <location>
        <begin position="28"/>
        <end position="275"/>
    </location>
</feature>
<feature type="transmembrane region" description="Helical; Name=1" evidence="2">
    <location>
        <begin position="276"/>
        <end position="296"/>
    </location>
</feature>
<feature type="topological domain" description="Cytoplasmic" evidence="2">
    <location>
        <begin position="297"/>
        <end position="312"/>
    </location>
</feature>
<feature type="transmembrane region" description="Helical; Name=2" evidence="2">
    <location>
        <begin position="313"/>
        <end position="333"/>
    </location>
</feature>
<feature type="topological domain" description="Extracellular" evidence="2">
    <location>
        <begin position="334"/>
        <end position="396"/>
    </location>
</feature>
<feature type="transmembrane region" description="Helical; Name=3" evidence="2">
    <location>
        <begin position="397"/>
        <end position="417"/>
    </location>
</feature>
<feature type="topological domain" description="Cytoplasmic" evidence="2">
    <location>
        <begin position="418"/>
        <end position="439"/>
    </location>
</feature>
<feature type="transmembrane region" description="Helical; Name=4" evidence="2">
    <location>
        <begin position="440"/>
        <end position="460"/>
    </location>
</feature>
<feature type="topological domain" description="Extracellular" evidence="2">
    <location>
        <begin position="461"/>
        <end position="483"/>
    </location>
</feature>
<feature type="transmembrane region" description="Helical; Name=5" evidence="2">
    <location>
        <begin position="484"/>
        <end position="504"/>
    </location>
</feature>
<feature type="topological domain" description="Cytoplasmic" evidence="2">
    <location>
        <begin position="505"/>
        <end position="532"/>
    </location>
</feature>
<feature type="transmembrane region" description="Helical; Name=6" evidence="2">
    <location>
        <begin position="533"/>
        <end position="553"/>
    </location>
</feature>
<feature type="topological domain" description="Extracellular" evidence="2">
    <location>
        <begin position="554"/>
        <end position="584"/>
    </location>
</feature>
<feature type="transmembrane region" description="Helical; Name=7" evidence="2">
    <location>
        <begin position="585"/>
        <end position="605"/>
    </location>
</feature>
<feature type="topological domain" description="Cytoplasmic" evidence="2">
    <location>
        <begin position="606"/>
        <end position="694"/>
    </location>
</feature>
<feature type="domain" description="FZ" evidence="3">
    <location>
        <begin position="30"/>
        <end position="151"/>
    </location>
</feature>
<feature type="region of interest" description="Wnt-binding" evidence="1">
    <location>
        <begin position="95"/>
        <end position="100"/>
    </location>
</feature>
<feature type="region of interest" description="Wnt-binding" evidence="1">
    <location>
        <begin position="147"/>
        <end position="152"/>
    </location>
</feature>
<feature type="region of interest" description="Disordered" evidence="4">
    <location>
        <begin position="155"/>
        <end position="226"/>
    </location>
</feature>
<feature type="region of interest" description="Disordered" evidence="4">
    <location>
        <begin position="648"/>
        <end position="668"/>
    </location>
</feature>
<feature type="short sequence motif" description="Lys-Thr-X-X-X-Trp motif, mediates interaction with the PDZ domain of Dvl family members" evidence="1">
    <location>
        <begin position="608"/>
        <end position="613"/>
    </location>
</feature>
<feature type="short sequence motif" description="PDZ-binding">
    <location>
        <begin position="692"/>
        <end position="694"/>
    </location>
</feature>
<feature type="compositionally biased region" description="Pro residues" evidence="4">
    <location>
        <begin position="161"/>
        <end position="175"/>
    </location>
</feature>
<feature type="compositionally biased region" description="Low complexity" evidence="4">
    <location>
        <begin position="176"/>
        <end position="186"/>
    </location>
</feature>
<feature type="compositionally biased region" description="Gly residues" evidence="4">
    <location>
        <begin position="210"/>
        <end position="225"/>
    </location>
</feature>
<feature type="compositionally biased region" description="Gly residues" evidence="4">
    <location>
        <begin position="648"/>
        <end position="664"/>
    </location>
</feature>
<feature type="binding site" evidence="1">
    <location>
        <begin position="71"/>
        <end position="78"/>
    </location>
    <ligand>
        <name>hexadecanoate</name>
        <dbReference type="ChEBI" id="CHEBI:7896"/>
    </ligand>
</feature>
<feature type="glycosylation site" description="N-linked (GlcNAc...) asparagine" evidence="2">
    <location>
        <position position="49"/>
    </location>
</feature>
<feature type="glycosylation site" description="N-linked (GlcNAc...) asparagine" evidence="2">
    <location>
        <position position="152"/>
    </location>
</feature>
<feature type="glycosylation site" description="N-linked (GlcNAc...) asparagine" evidence="2">
    <location>
        <position position="475"/>
    </location>
</feature>
<feature type="disulfide bond" evidence="3">
    <location>
        <begin position="35"/>
        <end position="96"/>
    </location>
</feature>
<feature type="disulfide bond" evidence="3">
    <location>
        <begin position="43"/>
        <end position="89"/>
    </location>
</feature>
<feature type="disulfide bond" evidence="3">
    <location>
        <begin position="80"/>
        <end position="118"/>
    </location>
</feature>
<feature type="disulfide bond" evidence="3">
    <location>
        <begin position="107"/>
        <end position="148"/>
    </location>
</feature>
<feature type="disulfide bond" evidence="3">
    <location>
        <begin position="111"/>
        <end position="135"/>
    </location>
</feature>
<feature type="strand" evidence="9">
    <location>
        <begin position="35"/>
        <end position="37"/>
    </location>
</feature>
<feature type="helix" evidence="10">
    <location>
        <begin position="41"/>
        <end position="43"/>
    </location>
</feature>
<feature type="strand" evidence="11">
    <location>
        <begin position="44"/>
        <end position="47"/>
    </location>
</feature>
<feature type="strand" evidence="9">
    <location>
        <begin position="50"/>
        <end position="54"/>
    </location>
</feature>
<feature type="helix" evidence="10">
    <location>
        <begin position="62"/>
        <end position="70"/>
    </location>
</feature>
<feature type="helix" evidence="10">
    <location>
        <begin position="73"/>
        <end position="78"/>
    </location>
</feature>
<feature type="helix" evidence="10">
    <location>
        <begin position="84"/>
        <end position="92"/>
    </location>
</feature>
<feature type="helix" evidence="10">
    <location>
        <begin position="108"/>
        <end position="124"/>
    </location>
</feature>
<feature type="helix" evidence="10">
    <location>
        <begin position="131"/>
        <end position="133"/>
    </location>
</feature>
<feature type="strand" evidence="10">
    <location>
        <begin position="135"/>
        <end position="138"/>
    </location>
</feature>
<feature type="strand" evidence="10">
    <location>
        <begin position="144"/>
        <end position="146"/>
    </location>
</feature>
<organism>
    <name type="scientific">Homo sapiens</name>
    <name type="common">Human</name>
    <dbReference type="NCBI Taxonomy" id="9606"/>
    <lineage>
        <taxon>Eukaryota</taxon>
        <taxon>Metazoa</taxon>
        <taxon>Chordata</taxon>
        <taxon>Craniata</taxon>
        <taxon>Vertebrata</taxon>
        <taxon>Euteleostomi</taxon>
        <taxon>Mammalia</taxon>
        <taxon>Eutheria</taxon>
        <taxon>Euarchontoglires</taxon>
        <taxon>Primates</taxon>
        <taxon>Haplorrhini</taxon>
        <taxon>Catarrhini</taxon>
        <taxon>Hominidae</taxon>
        <taxon>Homo</taxon>
    </lineage>
</organism>
<keyword id="KW-0002">3D-structure</keyword>
<keyword id="KW-1003">Cell membrane</keyword>
<keyword id="KW-0217">Developmental protein</keyword>
<keyword id="KW-1015">Disulfide bond</keyword>
<keyword id="KW-0297">G-protein coupled receptor</keyword>
<keyword id="KW-0325">Glycoprotein</keyword>
<keyword id="KW-0333">Golgi apparatus</keyword>
<keyword id="KW-0472">Membrane</keyword>
<keyword id="KW-1267">Proteomics identification</keyword>
<keyword id="KW-0675">Receptor</keyword>
<keyword id="KW-1185">Reference proteome</keyword>
<keyword id="KW-0732">Signal</keyword>
<keyword id="KW-0807">Transducer</keyword>
<keyword id="KW-0812">Transmembrane</keyword>
<keyword id="KW-1133">Transmembrane helix</keyword>
<keyword id="KW-0832">Ubl conjugation</keyword>
<keyword id="KW-0879">Wnt signaling pathway</keyword>
<reference key="1">
    <citation type="journal article" date="2001" name="Int. J. Oncol.">
        <title>Molecular cloning and characterization of human Frizzled-8 gene on chromosome 10p11.2.</title>
        <authorList>
            <person name="Saitoh T."/>
            <person name="Hirai M."/>
            <person name="Katoh M."/>
        </authorList>
    </citation>
    <scope>NUCLEOTIDE SEQUENCE [MRNA]</scope>
</reference>
<reference key="2">
    <citation type="journal article" date="2004" name="Nature">
        <title>The DNA sequence and comparative analysis of human chromosome 10.</title>
        <authorList>
            <person name="Deloukas P."/>
            <person name="Earthrowl M.E."/>
            <person name="Grafham D.V."/>
            <person name="Rubenfield M."/>
            <person name="French L."/>
            <person name="Steward C.A."/>
            <person name="Sims S.K."/>
            <person name="Jones M.C."/>
            <person name="Searle S."/>
            <person name="Scott C."/>
            <person name="Howe K."/>
            <person name="Hunt S.E."/>
            <person name="Andrews T.D."/>
            <person name="Gilbert J.G.R."/>
            <person name="Swarbreck D."/>
            <person name="Ashurst J.L."/>
            <person name="Taylor A."/>
            <person name="Battles J."/>
            <person name="Bird C.P."/>
            <person name="Ainscough R."/>
            <person name="Almeida J.P."/>
            <person name="Ashwell R.I.S."/>
            <person name="Ambrose K.D."/>
            <person name="Babbage A.K."/>
            <person name="Bagguley C.L."/>
            <person name="Bailey J."/>
            <person name="Banerjee R."/>
            <person name="Bates K."/>
            <person name="Beasley H."/>
            <person name="Bray-Allen S."/>
            <person name="Brown A.J."/>
            <person name="Brown J.Y."/>
            <person name="Burford D.C."/>
            <person name="Burrill W."/>
            <person name="Burton J."/>
            <person name="Cahill P."/>
            <person name="Camire D."/>
            <person name="Carter N.P."/>
            <person name="Chapman J.C."/>
            <person name="Clark S.Y."/>
            <person name="Clarke G."/>
            <person name="Clee C.M."/>
            <person name="Clegg S."/>
            <person name="Corby N."/>
            <person name="Coulson A."/>
            <person name="Dhami P."/>
            <person name="Dutta I."/>
            <person name="Dunn M."/>
            <person name="Faulkner L."/>
            <person name="Frankish A."/>
            <person name="Frankland J.A."/>
            <person name="Garner P."/>
            <person name="Garnett J."/>
            <person name="Gribble S."/>
            <person name="Griffiths C."/>
            <person name="Grocock R."/>
            <person name="Gustafson E."/>
            <person name="Hammond S."/>
            <person name="Harley J.L."/>
            <person name="Hart E."/>
            <person name="Heath P.D."/>
            <person name="Ho T.P."/>
            <person name="Hopkins B."/>
            <person name="Horne J."/>
            <person name="Howden P.J."/>
            <person name="Huckle E."/>
            <person name="Hynds C."/>
            <person name="Johnson C."/>
            <person name="Johnson D."/>
            <person name="Kana A."/>
            <person name="Kay M."/>
            <person name="Kimberley A.M."/>
            <person name="Kershaw J.K."/>
            <person name="Kokkinaki M."/>
            <person name="Laird G.K."/>
            <person name="Lawlor S."/>
            <person name="Lee H.M."/>
            <person name="Leongamornlert D.A."/>
            <person name="Laird G."/>
            <person name="Lloyd C."/>
            <person name="Lloyd D.M."/>
            <person name="Loveland J."/>
            <person name="Lovell J."/>
            <person name="McLaren S."/>
            <person name="McLay K.E."/>
            <person name="McMurray A."/>
            <person name="Mashreghi-Mohammadi M."/>
            <person name="Matthews L."/>
            <person name="Milne S."/>
            <person name="Nickerson T."/>
            <person name="Nguyen M."/>
            <person name="Overton-Larty E."/>
            <person name="Palmer S.A."/>
            <person name="Pearce A.V."/>
            <person name="Peck A.I."/>
            <person name="Pelan S."/>
            <person name="Phillimore B."/>
            <person name="Porter K."/>
            <person name="Rice C.M."/>
            <person name="Rogosin A."/>
            <person name="Ross M.T."/>
            <person name="Sarafidou T."/>
            <person name="Sehra H.K."/>
            <person name="Shownkeen R."/>
            <person name="Skuce C.D."/>
            <person name="Smith M."/>
            <person name="Standring L."/>
            <person name="Sycamore N."/>
            <person name="Tester J."/>
            <person name="Thorpe A."/>
            <person name="Torcasso W."/>
            <person name="Tracey A."/>
            <person name="Tromans A."/>
            <person name="Tsolas J."/>
            <person name="Wall M."/>
            <person name="Walsh J."/>
            <person name="Wang H."/>
            <person name="Weinstock K."/>
            <person name="West A.P."/>
            <person name="Willey D.L."/>
            <person name="Whitehead S.L."/>
            <person name="Wilming L."/>
            <person name="Wray P.W."/>
            <person name="Young L."/>
            <person name="Chen Y."/>
            <person name="Lovering R.C."/>
            <person name="Moschonas N.K."/>
            <person name="Siebert R."/>
            <person name="Fechtel K."/>
            <person name="Bentley D."/>
            <person name="Durbin R.M."/>
            <person name="Hubbard T."/>
            <person name="Doucette-Stamm L."/>
            <person name="Beck S."/>
            <person name="Smith D.R."/>
            <person name="Rogers J."/>
        </authorList>
    </citation>
    <scope>NUCLEOTIDE SEQUENCE [LARGE SCALE GENOMIC DNA]</scope>
</reference>
<reference key="3">
    <citation type="journal article" date="2001" name="Curr. Biol.">
        <title>Head inducer Dickkopf-1 is a ligand for Wnt coreceptor LRP6.</title>
        <authorList>
            <person name="Semenov M.V."/>
            <person name="Tamai K."/>
            <person name="Brott B.K."/>
            <person name="Kuhl M."/>
            <person name="Sokol S."/>
            <person name="He X."/>
        </authorList>
    </citation>
    <scope>INTERACTION WITH LRP5 AND LRP6 IN THE WNT-FZD-LRP5-LRP6 COMPLEX</scope>
    <scope>FUNCTION</scope>
</reference>
<reference key="4">
    <citation type="journal article" date="2006" name="Protein Sci.">
        <title>Solution structure of GOPC PDZ domain and its interaction with the C-terminal motif of neuroligin.</title>
        <authorList>
            <person name="Li X."/>
            <person name="Zhang J."/>
            <person name="Cao Z."/>
            <person name="Wu J."/>
            <person name="Shi Y."/>
        </authorList>
    </citation>
    <scope>INTERACTION WITH GOPC</scope>
</reference>
<reference key="5">
    <citation type="journal article" date="2012" name="Nature">
        <title>ZNRF3 promotes Wnt receptor turnover in an R-spondin-sensitive manner.</title>
        <authorList>
            <person name="Hao H.X."/>
            <person name="Xie Y."/>
            <person name="Zhang Y."/>
            <person name="Charlat O."/>
            <person name="Oster E."/>
            <person name="Avello M."/>
            <person name="Lei H."/>
            <person name="Mickanin C."/>
            <person name="Liu D."/>
            <person name="Ruffner H."/>
            <person name="Mao X."/>
            <person name="Ma Q."/>
            <person name="Zamponi R."/>
            <person name="Bouwmeester T."/>
            <person name="Finan P.M."/>
            <person name="Kirschner M.W."/>
            <person name="Porter J.A."/>
            <person name="Serluca F.C."/>
            <person name="Cong F."/>
        </authorList>
    </citation>
    <scope>UBIQUITINATION BY ZNRF3</scope>
</reference>
<reference key="6">
    <citation type="journal article" date="2014" name="J. Cell Sci.">
        <title>Glypican-3 binds to Frizzled and plays a direct role in the stimulation of canonical Wnt signaling.</title>
        <authorList>
            <person name="Capurro M."/>
            <person name="Martin T."/>
            <person name="Shi W."/>
            <person name="Filmus J."/>
        </authorList>
    </citation>
    <scope>INTERACTION WITH GPC3</scope>
</reference>
<dbReference type="EMBL" id="AB043703">
    <property type="protein sequence ID" value="BAB41064.1"/>
    <property type="molecule type" value="mRNA"/>
</dbReference>
<dbReference type="EMBL" id="AL121749">
    <property type="status" value="NOT_ANNOTATED_CDS"/>
    <property type="molecule type" value="Genomic_DNA"/>
</dbReference>
<dbReference type="CCDS" id="CCDS7192.1"/>
<dbReference type="RefSeq" id="NP_114072.1">
    <property type="nucleotide sequence ID" value="NM_031866.3"/>
</dbReference>
<dbReference type="PDB" id="5UN5">
    <property type="method" value="X-ray"/>
    <property type="resolution" value="2.99 A"/>
    <property type="chains" value="A/B=28-150"/>
</dbReference>
<dbReference type="PDB" id="5UN6">
    <property type="method" value="X-ray"/>
    <property type="resolution" value="3.20 A"/>
    <property type="chains" value="A/B/C/D=28-150"/>
</dbReference>
<dbReference type="PDB" id="6NDZ">
    <property type="method" value="X-ray"/>
    <property type="resolution" value="2.26 A"/>
    <property type="chains" value="A/C/E=32-150"/>
</dbReference>
<dbReference type="PDB" id="8X0T">
    <property type="method" value="X-ray"/>
    <property type="resolution" value="2.50 A"/>
    <property type="chains" value="A=30-153"/>
</dbReference>
<dbReference type="PDBsum" id="5UN5"/>
<dbReference type="PDBsum" id="5UN6"/>
<dbReference type="PDBsum" id="6NDZ"/>
<dbReference type="PDBsum" id="8X0T"/>
<dbReference type="SMR" id="Q9H461"/>
<dbReference type="BioGRID" id="113921">
    <property type="interactions" value="21"/>
</dbReference>
<dbReference type="FunCoup" id="Q9H461">
    <property type="interactions" value="1127"/>
</dbReference>
<dbReference type="IntAct" id="Q9H461">
    <property type="interactions" value="13"/>
</dbReference>
<dbReference type="STRING" id="9606.ENSP00000363826"/>
<dbReference type="ChEMBL" id="CHEMBL3559689"/>
<dbReference type="DrugCentral" id="Q9H461"/>
<dbReference type="GuidetoPHARMACOLOGY" id="236"/>
<dbReference type="GlyCosmos" id="Q9H461">
    <property type="glycosylation" value="3 sites, No reported glycans"/>
</dbReference>
<dbReference type="GlyGen" id="Q9H461">
    <property type="glycosylation" value="3 sites, 1 N-linked glycan (1 site)"/>
</dbReference>
<dbReference type="iPTMnet" id="Q9H461"/>
<dbReference type="PhosphoSitePlus" id="Q9H461"/>
<dbReference type="SwissPalm" id="Q9H461"/>
<dbReference type="BioMuta" id="FZD8"/>
<dbReference type="DMDM" id="17433053"/>
<dbReference type="jPOST" id="Q9H461"/>
<dbReference type="MassIVE" id="Q9H461"/>
<dbReference type="PaxDb" id="9606-ENSP00000363826"/>
<dbReference type="PeptideAtlas" id="Q9H461"/>
<dbReference type="ProteomicsDB" id="80787"/>
<dbReference type="ABCD" id="Q9H461">
    <property type="antibodies" value="44 sequenced antibodies"/>
</dbReference>
<dbReference type="Antibodypedia" id="13314">
    <property type="antibodies" value="342 antibodies from 41 providers"/>
</dbReference>
<dbReference type="DNASU" id="8325"/>
<dbReference type="Ensembl" id="ENST00000374694.3">
    <property type="protein sequence ID" value="ENSP00000363826.1"/>
    <property type="gene ID" value="ENSG00000177283.8"/>
</dbReference>
<dbReference type="GeneID" id="8325"/>
<dbReference type="KEGG" id="hsa:8325"/>
<dbReference type="MANE-Select" id="ENST00000374694.3">
    <property type="protein sequence ID" value="ENSP00000363826.1"/>
    <property type="RefSeq nucleotide sequence ID" value="NM_031866.3"/>
    <property type="RefSeq protein sequence ID" value="NP_114072.1"/>
</dbReference>
<dbReference type="UCSC" id="uc001iyz.2">
    <property type="organism name" value="human"/>
</dbReference>
<dbReference type="AGR" id="HGNC:4046"/>
<dbReference type="CTD" id="8325"/>
<dbReference type="DisGeNET" id="8325"/>
<dbReference type="GeneCards" id="FZD8"/>
<dbReference type="HGNC" id="HGNC:4046">
    <property type="gene designation" value="FZD8"/>
</dbReference>
<dbReference type="HPA" id="ENSG00000177283">
    <property type="expression patterns" value="Tissue enhanced (choroid)"/>
</dbReference>
<dbReference type="MIM" id="606146">
    <property type="type" value="gene"/>
</dbReference>
<dbReference type="neXtProt" id="NX_Q9H461"/>
<dbReference type="OpenTargets" id="ENSG00000177283"/>
<dbReference type="PharmGKB" id="PA28463"/>
<dbReference type="VEuPathDB" id="HostDB:ENSG00000177283"/>
<dbReference type="eggNOG" id="KOG3577">
    <property type="taxonomic scope" value="Eukaryota"/>
</dbReference>
<dbReference type="GeneTree" id="ENSGT00940000161191"/>
<dbReference type="HOGENOM" id="CLU_007873_2_0_1"/>
<dbReference type="InParanoid" id="Q9H461"/>
<dbReference type="OMA" id="LPCHNPY"/>
<dbReference type="OrthoDB" id="10053709at2759"/>
<dbReference type="PAN-GO" id="Q9H461">
    <property type="GO annotations" value="6 GO annotations based on evolutionary models"/>
</dbReference>
<dbReference type="PhylomeDB" id="Q9H461"/>
<dbReference type="TreeFam" id="TF317907"/>
<dbReference type="PathwayCommons" id="Q9H461"/>
<dbReference type="Reactome" id="R-HSA-373080">
    <property type="pathway name" value="Class B/2 (Secretin family receptors)"/>
</dbReference>
<dbReference type="Reactome" id="R-HSA-4608870">
    <property type="pathway name" value="Asymmetric localization of PCP proteins"/>
</dbReference>
<dbReference type="Reactome" id="R-HSA-4641263">
    <property type="pathway name" value="Regulation of FZD by ubiquitination"/>
</dbReference>
<dbReference type="Reactome" id="R-HSA-5340588">
    <property type="pathway name" value="Signaling by RNF43 mutants"/>
</dbReference>
<dbReference type="SignaLink" id="Q9H461"/>
<dbReference type="SIGNOR" id="Q9H461"/>
<dbReference type="BioGRID-ORCS" id="8325">
    <property type="hits" value="13 hits in 1140 CRISPR screens"/>
</dbReference>
<dbReference type="GeneWiki" id="FZD8"/>
<dbReference type="GenomeRNAi" id="8325"/>
<dbReference type="Pharos" id="Q9H461">
    <property type="development level" value="Tbio"/>
</dbReference>
<dbReference type="PRO" id="PR:Q9H461"/>
<dbReference type="Proteomes" id="UP000005640">
    <property type="component" value="Chromosome 10"/>
</dbReference>
<dbReference type="RNAct" id="Q9H461">
    <property type="molecule type" value="protein"/>
</dbReference>
<dbReference type="Bgee" id="ENSG00000177283">
    <property type="expression patterns" value="Expressed in ventricular zone and 171 other cell types or tissues"/>
</dbReference>
<dbReference type="GO" id="GO:0005794">
    <property type="term" value="C:Golgi apparatus"/>
    <property type="evidence" value="ECO:0007669"/>
    <property type="project" value="UniProtKB-SubCell"/>
</dbReference>
<dbReference type="GO" id="GO:0016020">
    <property type="term" value="C:membrane"/>
    <property type="evidence" value="ECO:0000304"/>
    <property type="project" value="UniProtKB"/>
</dbReference>
<dbReference type="GO" id="GO:0098992">
    <property type="term" value="C:neuronal dense core vesicle"/>
    <property type="evidence" value="ECO:0007669"/>
    <property type="project" value="Ensembl"/>
</dbReference>
<dbReference type="GO" id="GO:0005886">
    <property type="term" value="C:plasma membrane"/>
    <property type="evidence" value="ECO:0000318"/>
    <property type="project" value="GO_Central"/>
</dbReference>
<dbReference type="GO" id="GO:1990851">
    <property type="term" value="C:Wnt-Frizzled-LRP5/6 complex"/>
    <property type="evidence" value="ECO:0007669"/>
    <property type="project" value="Ensembl"/>
</dbReference>
<dbReference type="GO" id="GO:0004930">
    <property type="term" value="F:G protein-coupled receptor activity"/>
    <property type="evidence" value="ECO:0007669"/>
    <property type="project" value="UniProtKB-KW"/>
</dbReference>
<dbReference type="GO" id="GO:0030165">
    <property type="term" value="F:PDZ domain binding"/>
    <property type="evidence" value="ECO:0000353"/>
    <property type="project" value="BHF-UCL"/>
</dbReference>
<dbReference type="GO" id="GO:0005102">
    <property type="term" value="F:signaling receptor binding"/>
    <property type="evidence" value="ECO:0007669"/>
    <property type="project" value="Ensembl"/>
</dbReference>
<dbReference type="GO" id="GO:0031625">
    <property type="term" value="F:ubiquitin protein ligase binding"/>
    <property type="evidence" value="ECO:0000353"/>
    <property type="project" value="UniProtKB"/>
</dbReference>
<dbReference type="GO" id="GO:0042813">
    <property type="term" value="F:Wnt receptor activity"/>
    <property type="evidence" value="ECO:0000314"/>
    <property type="project" value="WormBase"/>
</dbReference>
<dbReference type="GO" id="GO:0017147">
    <property type="term" value="F:Wnt-protein binding"/>
    <property type="evidence" value="ECO:0000318"/>
    <property type="project" value="GO_Central"/>
</dbReference>
<dbReference type="GO" id="GO:0001525">
    <property type="term" value="P:angiogenesis"/>
    <property type="evidence" value="ECO:0007669"/>
    <property type="project" value="Ensembl"/>
</dbReference>
<dbReference type="GO" id="GO:0060070">
    <property type="term" value="P:canonical Wnt signaling pathway"/>
    <property type="evidence" value="ECO:0000314"/>
    <property type="project" value="WormBase"/>
</dbReference>
<dbReference type="GO" id="GO:0030182">
    <property type="term" value="P:neuron differentiation"/>
    <property type="evidence" value="ECO:0000250"/>
    <property type="project" value="UniProtKB"/>
</dbReference>
<dbReference type="GO" id="GO:0035567">
    <property type="term" value="P:non-canonical Wnt signaling pathway"/>
    <property type="evidence" value="ECO:0000318"/>
    <property type="project" value="GO_Central"/>
</dbReference>
<dbReference type="GO" id="GO:0033077">
    <property type="term" value="P:T cell differentiation in thymus"/>
    <property type="evidence" value="ECO:0007669"/>
    <property type="project" value="Ensembl"/>
</dbReference>
<dbReference type="CDD" id="cd15250">
    <property type="entry name" value="7tmF_FZD8"/>
    <property type="match status" value="1"/>
</dbReference>
<dbReference type="CDD" id="cd07461">
    <property type="entry name" value="CRD_FZ8"/>
    <property type="match status" value="1"/>
</dbReference>
<dbReference type="FunFam" id="1.10.2000.10:FF:000004">
    <property type="entry name" value="Frizzled class receptor 8a"/>
    <property type="match status" value="1"/>
</dbReference>
<dbReference type="Gene3D" id="1.10.2000.10">
    <property type="entry name" value="Frizzled cysteine-rich domain"/>
    <property type="match status" value="1"/>
</dbReference>
<dbReference type="Gene3D" id="1.20.1070.10">
    <property type="entry name" value="Rhodopsin 7-helix transmembrane proteins"/>
    <property type="match status" value="1"/>
</dbReference>
<dbReference type="InterPro" id="IPR015526">
    <property type="entry name" value="Frizzled/SFRP"/>
</dbReference>
<dbReference type="InterPro" id="IPR000539">
    <property type="entry name" value="Frizzled/Smoothened_7TM"/>
</dbReference>
<dbReference type="InterPro" id="IPR020067">
    <property type="entry name" value="Frizzled_dom"/>
</dbReference>
<dbReference type="InterPro" id="IPR036790">
    <property type="entry name" value="Frizzled_dom_sf"/>
</dbReference>
<dbReference type="InterPro" id="IPR041776">
    <property type="entry name" value="FZ8_CRD"/>
</dbReference>
<dbReference type="InterPro" id="IPR017981">
    <property type="entry name" value="GPCR_2-like_7TM"/>
</dbReference>
<dbReference type="PANTHER" id="PTHR11309">
    <property type="entry name" value="FRIZZLED"/>
    <property type="match status" value="1"/>
</dbReference>
<dbReference type="PANTHER" id="PTHR11309:SF90">
    <property type="entry name" value="FRIZZLED-8"/>
    <property type="match status" value="1"/>
</dbReference>
<dbReference type="Pfam" id="PF01534">
    <property type="entry name" value="Frizzled"/>
    <property type="match status" value="1"/>
</dbReference>
<dbReference type="Pfam" id="PF01392">
    <property type="entry name" value="Fz"/>
    <property type="match status" value="1"/>
</dbReference>
<dbReference type="PRINTS" id="PR00489">
    <property type="entry name" value="FRIZZLED"/>
</dbReference>
<dbReference type="SMART" id="SM00063">
    <property type="entry name" value="FRI"/>
    <property type="match status" value="1"/>
</dbReference>
<dbReference type="SMART" id="SM01330">
    <property type="entry name" value="Frizzled"/>
    <property type="match status" value="1"/>
</dbReference>
<dbReference type="SUPFAM" id="SSF63501">
    <property type="entry name" value="Frizzled cysteine-rich domain"/>
    <property type="match status" value="1"/>
</dbReference>
<dbReference type="PROSITE" id="PS50038">
    <property type="entry name" value="FZ"/>
    <property type="match status" value="1"/>
</dbReference>
<dbReference type="PROSITE" id="PS50261">
    <property type="entry name" value="G_PROTEIN_RECEP_F2_4"/>
    <property type="match status" value="1"/>
</dbReference>
<accession>Q9H461</accession>
<protein>
    <recommendedName>
        <fullName>Frizzled-8</fullName>
        <shortName>Fz-8</shortName>
        <shortName>hFz8</shortName>
    </recommendedName>
</protein>
<name>FZD8_HUMAN</name>
<comment type="function">
    <text evidence="5">Receptor for Wnt proteins. Component of the Wnt-Fzd-LRP5-LRP6 complex that triggers beta-catenin signaling through inducing aggregation of receptor-ligand complexes into ribosome-sized signalosomes. The beta-catenin canonical signaling pathway leads to the activation of disheveled proteins, inhibition of GSK-3 kinase, nuclear accumulation of beta-catenin and activation of Wnt target genes. A second signaling pathway involving PKC and calcium fluxes has been seen for some family members, but it is not yet clear if it represents a distinct pathway or if it can be integrated in the canonical pathway, as PKC seems to be required for Wnt-mediated inactivation of GSK-3 kinase. Both pathways seem to involve interactions with G-proteins. May be involved in transduction and intercellular transmission of polarity information during tissue morphogenesis and/or in differentiated tissues. Coreceptor along with RYK of Wnt proteins, such as WNT1.</text>
</comment>
<comment type="subunit">
    <text evidence="1 7">Component of a Wnt-signaling complex that contains a WNT protein, a FZD protein and LRP5 or LRP6. Interacts directly with LRP5 or LRP6; the interaction is promoted by Wnt-binding and signaling and inhibited by DKK1. Interacts with GPOC, RSPO1 and RSPO3 (By similarity). Interacts with glypican GPC3 (PubMed:24496449).</text>
</comment>
<comment type="interaction">
    <interactant intactId="EBI-6254212">
        <id>Q9H461</id>
    </interactant>
    <interactant intactId="EBI-6173037">
        <id>P56704</id>
        <label>WNT3A</label>
    </interactant>
    <organismsDiffer>false</organismsDiffer>
    <experiments>2</experiments>
</comment>
<comment type="interaction">
    <interactant intactId="EBI-6254212">
        <id>Q9H461</id>
    </interactant>
    <interactant intactId="EBI-299840">
        <id>P98086</id>
        <label>C1qa</label>
    </interactant>
    <organismsDiffer>true</organismsDiffer>
    <experiments>3</experiments>
</comment>
<comment type="subcellular location">
    <subcellularLocation>
        <location>Membrane</location>
        <topology>Multi-pass membrane protein</topology>
    </subcellularLocation>
    <subcellularLocation>
        <location evidence="1">Golgi apparatus</location>
    </subcellularLocation>
    <subcellularLocation>
        <location evidence="1">Cell membrane</location>
        <topology evidence="1">Multi-pass membrane protein</topology>
    </subcellularLocation>
    <text evidence="1">Colocalizes with GOPC at the Golgi apparatus.</text>
</comment>
<comment type="tissue specificity">
    <text>Most abundant in fetal kidney, followed by brain and lung. In adult tissues, expressed in kidney, heart, pancreas and skeletal muscle.</text>
</comment>
<comment type="domain">
    <text evidence="1">The PDZ-binding motif mediates interaction with GOPC.</text>
</comment>
<comment type="domain">
    <text evidence="1">Lys-Thr-X-X-X-Trp motif interacts with the PDZ domain of Dvl (Disheveled) family members and is involved in the activation of the Wnt/beta-catenin signaling pathway.</text>
</comment>
<comment type="domain">
    <text evidence="1">The FZ domain is involved in binding with Wnt ligands.</text>
</comment>
<comment type="PTM">
    <text evidence="6">Ubiquitinated by ZNRF3, leading to its degradation by the proteasome.</text>
</comment>
<comment type="similarity">
    <text evidence="8">Belongs to the G-protein coupled receptor Fz/Smo family.</text>
</comment>
<evidence type="ECO:0000250" key="1"/>
<evidence type="ECO:0000255" key="2"/>
<evidence type="ECO:0000255" key="3">
    <source>
        <dbReference type="PROSITE-ProRule" id="PRU00090"/>
    </source>
</evidence>
<evidence type="ECO:0000256" key="4">
    <source>
        <dbReference type="SAM" id="MobiDB-lite"/>
    </source>
</evidence>
<evidence type="ECO:0000269" key="5">
    <source>
    </source>
</evidence>
<evidence type="ECO:0000269" key="6">
    <source>
    </source>
</evidence>
<evidence type="ECO:0000269" key="7">
    <source>
    </source>
</evidence>
<evidence type="ECO:0000305" key="8"/>
<evidence type="ECO:0007829" key="9">
    <source>
        <dbReference type="PDB" id="5UN6"/>
    </source>
</evidence>
<evidence type="ECO:0007829" key="10">
    <source>
        <dbReference type="PDB" id="6NDZ"/>
    </source>
</evidence>
<evidence type="ECO:0007829" key="11">
    <source>
        <dbReference type="PDB" id="8X0T"/>
    </source>
</evidence>